<dbReference type="EC" id="1.8.3.2" evidence="1"/>
<dbReference type="EMBL" id="DP000009">
    <property type="protein sequence ID" value="ABF94551.1"/>
    <property type="molecule type" value="Genomic_DNA"/>
</dbReference>
<dbReference type="EMBL" id="AP008209">
    <property type="protein sequence ID" value="BAH92037.1"/>
    <property type="molecule type" value="Genomic_DNA"/>
</dbReference>
<dbReference type="EMBL" id="AP014959">
    <property type="protein sequence ID" value="BAS82866.1"/>
    <property type="molecule type" value="Genomic_DNA"/>
</dbReference>
<dbReference type="EMBL" id="AK102625">
    <property type="protein sequence ID" value="BAG95646.1"/>
    <property type="molecule type" value="mRNA"/>
</dbReference>
<dbReference type="RefSeq" id="XP_015628639.1">
    <molecule id="Q10Q80-1"/>
    <property type="nucleotide sequence ID" value="XM_015773153.1"/>
</dbReference>
<dbReference type="SMR" id="Q10Q80"/>
<dbReference type="FunCoup" id="Q10Q80">
    <property type="interactions" value="1042"/>
</dbReference>
<dbReference type="STRING" id="39947.Q10Q80"/>
<dbReference type="PaxDb" id="39947-Q10Q80"/>
<dbReference type="KEGG" id="dosa:Os03g0206300"/>
<dbReference type="KEGG" id="osa:9270137"/>
<dbReference type="eggNOG" id="KOG3355">
    <property type="taxonomic scope" value="Eukaryota"/>
</dbReference>
<dbReference type="HOGENOM" id="CLU_105631_0_0_1"/>
<dbReference type="InParanoid" id="Q10Q80"/>
<dbReference type="OrthoDB" id="17199at2759"/>
<dbReference type="Proteomes" id="UP000000763">
    <property type="component" value="Chromosome 3"/>
</dbReference>
<dbReference type="Proteomes" id="UP000059680">
    <property type="component" value="Chromosome 3"/>
</dbReference>
<dbReference type="GO" id="GO:0005739">
    <property type="term" value="C:mitochondrion"/>
    <property type="evidence" value="ECO:0000318"/>
    <property type="project" value="GO_Central"/>
</dbReference>
<dbReference type="GO" id="GO:0050660">
    <property type="term" value="F:flavin adenine dinucleotide binding"/>
    <property type="evidence" value="ECO:0000318"/>
    <property type="project" value="GO_Central"/>
</dbReference>
<dbReference type="GO" id="GO:0016971">
    <property type="term" value="F:flavin-dependent sulfhydryl oxidase activity"/>
    <property type="evidence" value="ECO:0000318"/>
    <property type="project" value="GO_Central"/>
</dbReference>
<dbReference type="FunFam" id="1.20.120.310:FF:000002">
    <property type="entry name" value="Sulfhydryl oxidase"/>
    <property type="match status" value="1"/>
</dbReference>
<dbReference type="Gene3D" id="1.20.120.310">
    <property type="entry name" value="ERV/ALR sulfhydryl oxidase domain"/>
    <property type="match status" value="1"/>
</dbReference>
<dbReference type="InterPro" id="IPR039799">
    <property type="entry name" value="ALR/ERV"/>
</dbReference>
<dbReference type="InterPro" id="IPR036774">
    <property type="entry name" value="ERV/ALR_sulphydryl_oxid_sf"/>
</dbReference>
<dbReference type="InterPro" id="IPR017905">
    <property type="entry name" value="ERV/ALR_sulphydryl_oxidase"/>
</dbReference>
<dbReference type="PANTHER" id="PTHR12645">
    <property type="entry name" value="ALR/ERV"/>
    <property type="match status" value="1"/>
</dbReference>
<dbReference type="PANTHER" id="PTHR12645:SF0">
    <property type="entry name" value="FAD-LINKED SULFHYDRYL OXIDASE ALR"/>
    <property type="match status" value="1"/>
</dbReference>
<dbReference type="Pfam" id="PF04777">
    <property type="entry name" value="Evr1_Alr"/>
    <property type="match status" value="1"/>
</dbReference>
<dbReference type="SUPFAM" id="SSF69000">
    <property type="entry name" value="FAD-dependent thiol oxidase"/>
    <property type="match status" value="1"/>
</dbReference>
<dbReference type="PROSITE" id="PS51324">
    <property type="entry name" value="ERV_ALR"/>
    <property type="match status" value="1"/>
</dbReference>
<gene>
    <name evidence="4" type="primary">ERV1</name>
    <name evidence="6" type="ordered locus">Os03g0206300</name>
    <name evidence="5" type="ordered locus">LOC_Os03g10850</name>
</gene>
<accession>Q10Q80</accession>
<comment type="function">
    <text evidence="1">FAD-dependent sulfhydryl oxidase that catalyzes disulfide bond formation. Oxidizes thioredoxin in vitro. Required for the import and folding of small cysteine-containing proteins in the mitochondrial intermembrane space, and can act independently of the oxidoreductase MIA40. Can oxidize the cytochrome c oxidase assembly protein COX19, a typical substrate of MIA40.</text>
</comment>
<comment type="catalytic activity">
    <reaction evidence="1">
        <text>2 R'C(R)SH + O2 = R'C(R)S-S(R)CR' + H2O2</text>
        <dbReference type="Rhea" id="RHEA:17357"/>
        <dbReference type="ChEBI" id="CHEBI:15379"/>
        <dbReference type="ChEBI" id="CHEBI:16240"/>
        <dbReference type="ChEBI" id="CHEBI:16520"/>
        <dbReference type="ChEBI" id="CHEBI:17412"/>
        <dbReference type="EC" id="1.8.3.2"/>
    </reaction>
    <physiologicalReaction direction="left-to-right" evidence="1">
        <dbReference type="Rhea" id="RHEA:17358"/>
    </physiologicalReaction>
</comment>
<comment type="cofactor">
    <cofactor evidence="1 2">
        <name>FAD</name>
        <dbReference type="ChEBI" id="CHEBI:57692"/>
    </cofactor>
</comment>
<comment type="subunit">
    <text evidence="1">Homodimer.</text>
</comment>
<comment type="subcellular location">
    <subcellularLocation>
        <location evidence="1">Mitochondrion</location>
    </subcellularLocation>
</comment>
<comment type="alternative products">
    <event type="alternative splicing"/>
    <isoform>
        <id>Q10Q80-1</id>
        <name>1</name>
        <sequence type="displayed"/>
    </isoform>
    <isoform>
        <id>Q10Q80-2</id>
        <name>2</name>
        <sequence type="described" ref="VSP_058587 VSP_058588"/>
    </isoform>
</comment>
<comment type="PTM">
    <text evidence="1">Contains three disulfide bonds; one catalytic disulfide (Cys-119 to Cys-122), one structural disulfide (Cys-148 to Cys-165), and one shuttle disulfide (Cys-177 to Cys-182).</text>
</comment>
<sequence length="194" mass="21604">MPPPAWGWGSNPLEPVVHTVAAFSRRLLIAPDAAPDEARLRPLLSLSLSPPPTPPSPPPPPPEVLKKDSKAAPLTKEEVGRATWMLLHTIAAQFPDEPTRQQRRDARELMAIISRLYPCKECAEHFKEVLKANPVQAGSQAEFSQWLCYVHNVVNRSLGKPIFPCQRVNARWGKLDCPERSCDLEGSNDIIPNR</sequence>
<proteinExistence type="evidence at transcript level"/>
<keyword id="KW-0025">Alternative splicing</keyword>
<keyword id="KW-1015">Disulfide bond</keyword>
<keyword id="KW-0274">FAD</keyword>
<keyword id="KW-0285">Flavoprotein</keyword>
<keyword id="KW-0496">Mitochondrion</keyword>
<keyword id="KW-0560">Oxidoreductase</keyword>
<keyword id="KW-1185">Reference proteome</keyword>
<evidence type="ECO:0000250" key="1">
    <source>
        <dbReference type="UniProtKB" id="Q8GXX0"/>
    </source>
</evidence>
<evidence type="ECO:0000255" key="2">
    <source>
        <dbReference type="PROSITE-ProRule" id="PRU00654"/>
    </source>
</evidence>
<evidence type="ECO:0000256" key="3">
    <source>
        <dbReference type="SAM" id="MobiDB-lite"/>
    </source>
</evidence>
<evidence type="ECO:0000305" key="4"/>
<evidence type="ECO:0000312" key="5">
    <source>
        <dbReference type="EMBL" id="ABF94551.1"/>
    </source>
</evidence>
<evidence type="ECO:0000312" key="6">
    <source>
        <dbReference type="EMBL" id="BAS82866.1"/>
    </source>
</evidence>
<reference key="1">
    <citation type="journal article" date="2005" name="Genome Res.">
        <title>Sequence, annotation, and analysis of synteny between rice chromosome 3 and diverged grass species.</title>
        <authorList>
            <consortium name="The rice chromosome 3 sequencing consortium"/>
            <person name="Buell C.R."/>
            <person name="Yuan Q."/>
            <person name="Ouyang S."/>
            <person name="Liu J."/>
            <person name="Zhu W."/>
            <person name="Wang A."/>
            <person name="Maiti R."/>
            <person name="Haas B."/>
            <person name="Wortman J."/>
            <person name="Pertea M."/>
            <person name="Jones K.M."/>
            <person name="Kim M."/>
            <person name="Overton L."/>
            <person name="Tsitrin T."/>
            <person name="Fadrosh D."/>
            <person name="Bera J."/>
            <person name="Weaver B."/>
            <person name="Jin S."/>
            <person name="Johri S."/>
            <person name="Reardon M."/>
            <person name="Webb K."/>
            <person name="Hill J."/>
            <person name="Moffat K."/>
            <person name="Tallon L."/>
            <person name="Van Aken S."/>
            <person name="Lewis M."/>
            <person name="Utterback T."/>
            <person name="Feldblyum T."/>
            <person name="Zismann V."/>
            <person name="Iobst S."/>
            <person name="Hsiao J."/>
            <person name="de Vazeille A.R."/>
            <person name="Salzberg S.L."/>
            <person name="White O."/>
            <person name="Fraser C.M."/>
            <person name="Yu Y."/>
            <person name="Kim H."/>
            <person name="Rambo T."/>
            <person name="Currie J."/>
            <person name="Collura K."/>
            <person name="Kernodle-Thompson S."/>
            <person name="Wei F."/>
            <person name="Kudrna K."/>
            <person name="Ammiraju J.S.S."/>
            <person name="Luo M."/>
            <person name="Goicoechea J.L."/>
            <person name="Wing R.A."/>
            <person name="Henry D."/>
            <person name="Oates R."/>
            <person name="Palmer M."/>
            <person name="Pries G."/>
            <person name="Saski C."/>
            <person name="Simmons J."/>
            <person name="Soderlund C."/>
            <person name="Nelson W."/>
            <person name="de la Bastide M."/>
            <person name="Spiegel L."/>
            <person name="Nascimento L."/>
            <person name="Huang E."/>
            <person name="Preston R."/>
            <person name="Zutavern T."/>
            <person name="Palmer L."/>
            <person name="O'Shaughnessy A."/>
            <person name="Dike S."/>
            <person name="McCombie W.R."/>
            <person name="Minx P."/>
            <person name="Cordum H."/>
            <person name="Wilson R."/>
            <person name="Jin W."/>
            <person name="Lee H.R."/>
            <person name="Jiang J."/>
            <person name="Jackson S."/>
        </authorList>
    </citation>
    <scope>NUCLEOTIDE SEQUENCE [LARGE SCALE GENOMIC DNA]</scope>
    <source>
        <strain>cv. Nipponbare</strain>
    </source>
</reference>
<reference key="2">
    <citation type="journal article" date="2005" name="Nature">
        <title>The map-based sequence of the rice genome.</title>
        <authorList>
            <consortium name="International rice genome sequencing project (IRGSP)"/>
        </authorList>
    </citation>
    <scope>NUCLEOTIDE SEQUENCE [LARGE SCALE GENOMIC DNA]</scope>
    <source>
        <strain>cv. Nipponbare</strain>
    </source>
</reference>
<reference key="3">
    <citation type="journal article" date="2008" name="Nucleic Acids Res.">
        <title>The rice annotation project database (RAP-DB): 2008 update.</title>
        <authorList>
            <consortium name="The rice annotation project (RAP)"/>
        </authorList>
    </citation>
    <scope>GENOME REANNOTATION</scope>
    <source>
        <strain>cv. Nipponbare</strain>
    </source>
</reference>
<reference key="4">
    <citation type="journal article" date="2013" name="Rice">
        <title>Improvement of the Oryza sativa Nipponbare reference genome using next generation sequence and optical map data.</title>
        <authorList>
            <person name="Kawahara Y."/>
            <person name="de la Bastide M."/>
            <person name="Hamilton J.P."/>
            <person name="Kanamori H."/>
            <person name="McCombie W.R."/>
            <person name="Ouyang S."/>
            <person name="Schwartz D.C."/>
            <person name="Tanaka T."/>
            <person name="Wu J."/>
            <person name="Zhou S."/>
            <person name="Childs K.L."/>
            <person name="Davidson R.M."/>
            <person name="Lin H."/>
            <person name="Quesada-Ocampo L."/>
            <person name="Vaillancourt B."/>
            <person name="Sakai H."/>
            <person name="Lee S.S."/>
            <person name="Kim J."/>
            <person name="Numa H."/>
            <person name="Itoh T."/>
            <person name="Buell C.R."/>
            <person name="Matsumoto T."/>
        </authorList>
    </citation>
    <scope>GENOME REANNOTATION</scope>
    <source>
        <strain>cv. Nipponbare</strain>
    </source>
</reference>
<reference key="5">
    <citation type="journal article" date="2003" name="Science">
        <title>Collection, mapping, and annotation of over 28,000 cDNA clones from japonica rice.</title>
        <authorList>
            <consortium name="The rice full-length cDNA consortium"/>
        </authorList>
    </citation>
    <scope>NUCLEOTIDE SEQUENCE [LARGE SCALE MRNA] (ISOFORM 2)</scope>
    <source>
        <strain>cv. Nipponbare</strain>
    </source>
</reference>
<name>ERV1_ORYSJ</name>
<feature type="chain" id="PRO_0000437986" description="FAD-linked sulfhydryl oxidase ERV1">
    <location>
        <begin position="1"/>
        <end position="194"/>
    </location>
</feature>
<feature type="domain" description="ERV/ALR sulfhydryl oxidase" evidence="2">
    <location>
        <begin position="72"/>
        <end position="172"/>
    </location>
</feature>
<feature type="region of interest" description="Disordered" evidence="3">
    <location>
        <begin position="44"/>
        <end position="72"/>
    </location>
</feature>
<feature type="short sequence motif" description="Required for dimerization and substrate specificity" evidence="1">
    <location>
        <begin position="177"/>
        <end position="182"/>
    </location>
</feature>
<feature type="compositionally biased region" description="Pro residues" evidence="3">
    <location>
        <begin position="49"/>
        <end position="63"/>
    </location>
</feature>
<feature type="binding site" evidence="1">
    <location>
        <position position="76"/>
    </location>
    <ligand>
        <name>FAD</name>
        <dbReference type="ChEBI" id="CHEBI:57692"/>
    </ligand>
</feature>
<feature type="binding site" evidence="1">
    <location>
        <position position="81"/>
    </location>
    <ligand>
        <name>FAD</name>
        <dbReference type="ChEBI" id="CHEBI:57692"/>
    </ligand>
</feature>
<feature type="binding site" evidence="1">
    <location>
        <position position="84"/>
    </location>
    <ligand>
        <name>FAD</name>
        <dbReference type="ChEBI" id="CHEBI:57692"/>
    </ligand>
</feature>
<feature type="binding site" evidence="1">
    <location>
        <position position="121"/>
    </location>
    <ligand>
        <name>FAD</name>
        <dbReference type="ChEBI" id="CHEBI:57692"/>
    </ligand>
</feature>
<feature type="binding site" evidence="1">
    <location>
        <position position="125"/>
    </location>
    <ligand>
        <name>FAD</name>
        <dbReference type="ChEBI" id="CHEBI:57692"/>
    </ligand>
</feature>
<feature type="binding site" evidence="1">
    <location>
        <position position="148"/>
    </location>
    <ligand>
        <name>FAD</name>
        <dbReference type="ChEBI" id="CHEBI:57692"/>
    </ligand>
</feature>
<feature type="binding site" evidence="1">
    <location>
        <position position="151"/>
    </location>
    <ligand>
        <name>FAD</name>
        <dbReference type="ChEBI" id="CHEBI:57692"/>
    </ligand>
</feature>
<feature type="binding site" evidence="1">
    <location>
        <position position="152"/>
    </location>
    <ligand>
        <name>FAD</name>
        <dbReference type="ChEBI" id="CHEBI:57692"/>
    </ligand>
</feature>
<feature type="binding site" evidence="1">
    <location>
        <position position="155"/>
    </location>
    <ligand>
        <name>FAD</name>
        <dbReference type="ChEBI" id="CHEBI:57692"/>
    </ligand>
</feature>
<feature type="binding site" evidence="1">
    <location>
        <position position="160"/>
    </location>
    <ligand>
        <name>FAD</name>
        <dbReference type="ChEBI" id="CHEBI:57692"/>
    </ligand>
</feature>
<feature type="binding site" evidence="1">
    <location>
        <position position="171"/>
    </location>
    <ligand>
        <name>FAD</name>
        <dbReference type="ChEBI" id="CHEBI:57692"/>
    </ligand>
</feature>
<feature type="disulfide bond" description="Redox-active" evidence="2">
    <location>
        <begin position="119"/>
        <end position="122"/>
    </location>
</feature>
<feature type="disulfide bond" evidence="2">
    <location>
        <begin position="148"/>
        <end position="165"/>
    </location>
</feature>
<feature type="disulfide bond" evidence="1">
    <location>
        <begin position="177"/>
        <end position="182"/>
    </location>
</feature>
<feature type="splice variant" id="VSP_058587" description="In isoform 2.">
    <original>MAIISRLYPCKEC</original>
    <variation>VSIKQDKQLVISL</variation>
    <location>
        <begin position="110"/>
        <end position="122"/>
    </location>
</feature>
<feature type="splice variant" id="VSP_058588" description="In isoform 2.">
    <location>
        <begin position="123"/>
        <end position="194"/>
    </location>
</feature>
<organism>
    <name type="scientific">Oryza sativa subsp. japonica</name>
    <name type="common">Rice</name>
    <dbReference type="NCBI Taxonomy" id="39947"/>
    <lineage>
        <taxon>Eukaryota</taxon>
        <taxon>Viridiplantae</taxon>
        <taxon>Streptophyta</taxon>
        <taxon>Embryophyta</taxon>
        <taxon>Tracheophyta</taxon>
        <taxon>Spermatophyta</taxon>
        <taxon>Magnoliopsida</taxon>
        <taxon>Liliopsida</taxon>
        <taxon>Poales</taxon>
        <taxon>Poaceae</taxon>
        <taxon>BOP clade</taxon>
        <taxon>Oryzoideae</taxon>
        <taxon>Oryzeae</taxon>
        <taxon>Oryzinae</taxon>
        <taxon>Oryza</taxon>
        <taxon>Oryza sativa</taxon>
    </lineage>
</organism>
<protein>
    <recommendedName>
        <fullName evidence="4">FAD-linked sulfhydryl oxidase ERV1</fullName>
        <ecNumber evidence="1">1.8.3.2</ecNumber>
    </recommendedName>
    <alternativeName>
        <fullName evidence="4">Mitochondrial sulfhydryl oxidase ERV1</fullName>
    </alternativeName>
</protein>